<keyword id="KW-0001">2Fe-2S</keyword>
<keyword id="KW-0028">Amino-acid biosynthesis</keyword>
<keyword id="KW-0100">Branched-chain amino acid biosynthesis</keyword>
<keyword id="KW-0408">Iron</keyword>
<keyword id="KW-0411">Iron-sulfur</keyword>
<keyword id="KW-0456">Lyase</keyword>
<keyword id="KW-0460">Magnesium</keyword>
<keyword id="KW-0479">Metal-binding</keyword>
<name>ILVD_STRPS</name>
<proteinExistence type="inferred from homology"/>
<accession>B2IN52</accession>
<comment type="function">
    <text evidence="1">Functions in the biosynthesis of branched-chain amino acids. Catalyzes the dehydration of (2R,3R)-2,3-dihydroxy-3-methylpentanoate (2,3-dihydroxy-3-methylvalerate) into 2-oxo-3-methylpentanoate (2-oxo-3-methylvalerate) and of (2R)-2,3-dihydroxy-3-methylbutanoate (2,3-dihydroxyisovalerate) into 2-oxo-3-methylbutanoate (2-oxoisovalerate), the penultimate precursor to L-isoleucine and L-valine, respectively.</text>
</comment>
<comment type="catalytic activity">
    <reaction evidence="1">
        <text>(2R)-2,3-dihydroxy-3-methylbutanoate = 3-methyl-2-oxobutanoate + H2O</text>
        <dbReference type="Rhea" id="RHEA:24809"/>
        <dbReference type="ChEBI" id="CHEBI:11851"/>
        <dbReference type="ChEBI" id="CHEBI:15377"/>
        <dbReference type="ChEBI" id="CHEBI:49072"/>
        <dbReference type="EC" id="4.2.1.9"/>
    </reaction>
    <physiologicalReaction direction="left-to-right" evidence="1">
        <dbReference type="Rhea" id="RHEA:24810"/>
    </physiologicalReaction>
</comment>
<comment type="catalytic activity">
    <reaction evidence="1">
        <text>(2R,3R)-2,3-dihydroxy-3-methylpentanoate = (S)-3-methyl-2-oxopentanoate + H2O</text>
        <dbReference type="Rhea" id="RHEA:27694"/>
        <dbReference type="ChEBI" id="CHEBI:15377"/>
        <dbReference type="ChEBI" id="CHEBI:35146"/>
        <dbReference type="ChEBI" id="CHEBI:49258"/>
        <dbReference type="EC" id="4.2.1.9"/>
    </reaction>
    <physiologicalReaction direction="left-to-right" evidence="1">
        <dbReference type="Rhea" id="RHEA:27695"/>
    </physiologicalReaction>
</comment>
<comment type="cofactor">
    <cofactor evidence="1">
        <name>[2Fe-2S] cluster</name>
        <dbReference type="ChEBI" id="CHEBI:190135"/>
    </cofactor>
    <text evidence="1">Binds 1 [2Fe-2S] cluster per subunit. This cluster acts as a Lewis acid cofactor.</text>
</comment>
<comment type="cofactor">
    <cofactor evidence="1">
        <name>Mg(2+)</name>
        <dbReference type="ChEBI" id="CHEBI:18420"/>
    </cofactor>
</comment>
<comment type="pathway">
    <text evidence="1">Amino-acid biosynthesis; L-isoleucine biosynthesis; L-isoleucine from 2-oxobutanoate: step 3/4.</text>
</comment>
<comment type="pathway">
    <text evidence="1">Amino-acid biosynthesis; L-valine biosynthesis; L-valine from pyruvate: step 3/4.</text>
</comment>
<comment type="subunit">
    <text evidence="1">Homodimer.</text>
</comment>
<comment type="similarity">
    <text evidence="1">Belongs to the IlvD/Edd family.</text>
</comment>
<gene>
    <name evidence="1" type="primary">ilvD</name>
    <name type="ordered locus">SPCG_2095</name>
</gene>
<organism>
    <name type="scientific">Streptococcus pneumoniae (strain CGSP14)</name>
    <dbReference type="NCBI Taxonomy" id="516950"/>
    <lineage>
        <taxon>Bacteria</taxon>
        <taxon>Bacillati</taxon>
        <taxon>Bacillota</taxon>
        <taxon>Bacilli</taxon>
        <taxon>Lactobacillales</taxon>
        <taxon>Streptococcaceae</taxon>
        <taxon>Streptococcus</taxon>
    </lineage>
</organism>
<feature type="chain" id="PRO_1000089421" description="Dihydroxy-acid dehydratase">
    <location>
        <begin position="1"/>
        <end position="567"/>
    </location>
</feature>
<feature type="active site" description="Proton acceptor" evidence="1">
    <location>
        <position position="474"/>
    </location>
</feature>
<feature type="binding site" evidence="1">
    <location>
        <position position="52"/>
    </location>
    <ligand>
        <name>[2Fe-2S] cluster</name>
        <dbReference type="ChEBI" id="CHEBI:190135"/>
    </ligand>
</feature>
<feature type="binding site" evidence="1">
    <location>
        <position position="84"/>
    </location>
    <ligand>
        <name>Mg(2+)</name>
        <dbReference type="ChEBI" id="CHEBI:18420"/>
    </ligand>
</feature>
<feature type="binding site" evidence="1">
    <location>
        <position position="125"/>
    </location>
    <ligand>
        <name>[2Fe-2S] cluster</name>
        <dbReference type="ChEBI" id="CHEBI:190135"/>
    </ligand>
</feature>
<feature type="binding site" evidence="1">
    <location>
        <position position="126"/>
    </location>
    <ligand>
        <name>Mg(2+)</name>
        <dbReference type="ChEBI" id="CHEBI:18420"/>
    </ligand>
</feature>
<feature type="binding site" description="via carbamate group" evidence="1">
    <location>
        <position position="127"/>
    </location>
    <ligand>
        <name>Mg(2+)</name>
        <dbReference type="ChEBI" id="CHEBI:18420"/>
    </ligand>
</feature>
<feature type="binding site" evidence="1">
    <location>
        <position position="197"/>
    </location>
    <ligand>
        <name>[2Fe-2S] cluster</name>
        <dbReference type="ChEBI" id="CHEBI:190135"/>
    </ligand>
</feature>
<feature type="binding site" evidence="1">
    <location>
        <position position="448"/>
    </location>
    <ligand>
        <name>Mg(2+)</name>
        <dbReference type="ChEBI" id="CHEBI:18420"/>
    </ligand>
</feature>
<feature type="modified residue" description="N6-carboxylysine" evidence="1">
    <location>
        <position position="127"/>
    </location>
</feature>
<reference key="1">
    <citation type="journal article" date="2009" name="BMC Genomics">
        <title>Genome evolution driven by host adaptations results in a more virulent and antimicrobial-resistant Streptococcus pneumoniae serotype 14.</title>
        <authorList>
            <person name="Ding F."/>
            <person name="Tang P."/>
            <person name="Hsu M.-H."/>
            <person name="Cui P."/>
            <person name="Hu S."/>
            <person name="Yu J."/>
            <person name="Chiu C.-H."/>
        </authorList>
    </citation>
    <scope>NUCLEOTIDE SEQUENCE [LARGE SCALE GENOMIC DNA]</scope>
    <source>
        <strain>CGSP14</strain>
    </source>
</reference>
<dbReference type="EC" id="4.2.1.9" evidence="1"/>
<dbReference type="EMBL" id="CP001033">
    <property type="protein sequence ID" value="ACB91347.1"/>
    <property type="molecule type" value="Genomic_DNA"/>
</dbReference>
<dbReference type="RefSeq" id="WP_000137363.1">
    <property type="nucleotide sequence ID" value="NC_010582.1"/>
</dbReference>
<dbReference type="SMR" id="B2IN52"/>
<dbReference type="KEGG" id="spw:SPCG_2095"/>
<dbReference type="HOGENOM" id="CLU_014271_4_2_9"/>
<dbReference type="UniPathway" id="UPA00047">
    <property type="reaction ID" value="UER00057"/>
</dbReference>
<dbReference type="UniPathway" id="UPA00049">
    <property type="reaction ID" value="UER00061"/>
</dbReference>
<dbReference type="GO" id="GO:0051537">
    <property type="term" value="F:2 iron, 2 sulfur cluster binding"/>
    <property type="evidence" value="ECO:0007669"/>
    <property type="project" value="UniProtKB-UniRule"/>
</dbReference>
<dbReference type="GO" id="GO:0004160">
    <property type="term" value="F:dihydroxy-acid dehydratase activity"/>
    <property type="evidence" value="ECO:0007669"/>
    <property type="project" value="UniProtKB-UniRule"/>
</dbReference>
<dbReference type="GO" id="GO:0000287">
    <property type="term" value="F:magnesium ion binding"/>
    <property type="evidence" value="ECO:0007669"/>
    <property type="project" value="UniProtKB-UniRule"/>
</dbReference>
<dbReference type="GO" id="GO:0009097">
    <property type="term" value="P:isoleucine biosynthetic process"/>
    <property type="evidence" value="ECO:0007669"/>
    <property type="project" value="UniProtKB-UniRule"/>
</dbReference>
<dbReference type="GO" id="GO:0009099">
    <property type="term" value="P:L-valine biosynthetic process"/>
    <property type="evidence" value="ECO:0007669"/>
    <property type="project" value="UniProtKB-UniRule"/>
</dbReference>
<dbReference type="FunFam" id="3.50.30.80:FF:000001">
    <property type="entry name" value="Dihydroxy-acid dehydratase"/>
    <property type="match status" value="1"/>
</dbReference>
<dbReference type="Gene3D" id="3.50.30.80">
    <property type="entry name" value="IlvD/EDD C-terminal domain-like"/>
    <property type="match status" value="1"/>
</dbReference>
<dbReference type="HAMAP" id="MF_00012">
    <property type="entry name" value="IlvD"/>
    <property type="match status" value="1"/>
</dbReference>
<dbReference type="InterPro" id="IPR050165">
    <property type="entry name" value="DHAD_IlvD/Edd"/>
</dbReference>
<dbReference type="InterPro" id="IPR042096">
    <property type="entry name" value="Dihydro-acid_dehy_C"/>
</dbReference>
<dbReference type="InterPro" id="IPR004404">
    <property type="entry name" value="DihydroxyA_deHydtase"/>
</dbReference>
<dbReference type="InterPro" id="IPR020558">
    <property type="entry name" value="DiOHA_6PGluconate_deHydtase_CS"/>
</dbReference>
<dbReference type="InterPro" id="IPR056740">
    <property type="entry name" value="ILV_EDD_C"/>
</dbReference>
<dbReference type="InterPro" id="IPR000581">
    <property type="entry name" value="ILV_EDD_N"/>
</dbReference>
<dbReference type="InterPro" id="IPR037237">
    <property type="entry name" value="IlvD/EDD_N"/>
</dbReference>
<dbReference type="NCBIfam" id="TIGR00110">
    <property type="entry name" value="ilvD"/>
    <property type="match status" value="1"/>
</dbReference>
<dbReference type="NCBIfam" id="NF002068">
    <property type="entry name" value="PRK00911.1"/>
    <property type="match status" value="1"/>
</dbReference>
<dbReference type="PANTHER" id="PTHR21000">
    <property type="entry name" value="DIHYDROXY-ACID DEHYDRATASE DAD"/>
    <property type="match status" value="1"/>
</dbReference>
<dbReference type="PANTHER" id="PTHR21000:SF5">
    <property type="entry name" value="DIHYDROXY-ACID DEHYDRATASE, MITOCHONDRIAL"/>
    <property type="match status" value="1"/>
</dbReference>
<dbReference type="Pfam" id="PF24877">
    <property type="entry name" value="ILV_EDD_C"/>
    <property type="match status" value="1"/>
</dbReference>
<dbReference type="Pfam" id="PF00920">
    <property type="entry name" value="ILVD_EDD_N"/>
    <property type="match status" value="1"/>
</dbReference>
<dbReference type="SUPFAM" id="SSF143975">
    <property type="entry name" value="IlvD/EDD N-terminal domain-like"/>
    <property type="match status" value="1"/>
</dbReference>
<dbReference type="SUPFAM" id="SSF52016">
    <property type="entry name" value="LeuD/IlvD-like"/>
    <property type="match status" value="1"/>
</dbReference>
<dbReference type="PROSITE" id="PS00886">
    <property type="entry name" value="ILVD_EDD_1"/>
    <property type="match status" value="1"/>
</dbReference>
<dbReference type="PROSITE" id="PS00887">
    <property type="entry name" value="ILVD_EDD_2"/>
    <property type="match status" value="1"/>
</dbReference>
<evidence type="ECO:0000255" key="1">
    <source>
        <dbReference type="HAMAP-Rule" id="MF_00012"/>
    </source>
</evidence>
<sequence>MTELDKRHRSSIYDSMVKSPNRAMLRATGMTDKDFETSIVGVISTWAENTPCNIHLHDFGKLAKEGVKSAGAWPVQFGTITVADGIAMGTPGMRFSLTSRDIIADSIEAAMSGHNVDAFVAIGGCDKNMPGSMIAIANMDIPAIFAYGGTIAPGNLDGKDIDLVSVFEGIGKWNHGDMTAEDVKRLECNACPGPGGCGGMYTANTMATAIEVLGMSLPGSSSHPAESADKKEDIEAAGRAVVKMLELGLKPSDILTREAFEDAITVTMALGGSTNATLHLLAIAHAANVDLSLEDFNTIQERVPHLADLKPSGQYVFQDLYEVGGVPAVMKYLLANGFLHGDRITCTGKTVAENLADFADLTPGQKVIMPLENPKRADGPLIILNGNLAPDGAVAKVSGVKVRRHVGPAKVFDSEEDAIQAVLTDEIVDGDVVVVRFVGPKGGPGMPEMLSLSSMIVGKGQGDKVALLTDGRFSGGTYGLVVGHIAPEAQDGGPIAYLRTGDIVTVDQDTKEISMAVSEEELEKRKAETTLPPLYSRGVLGKYAYIVSSASRGAVTDFWNMDKSGKK</sequence>
<protein>
    <recommendedName>
        <fullName evidence="1">Dihydroxy-acid dehydratase</fullName>
        <shortName evidence="1">DAD</shortName>
        <ecNumber evidence="1">4.2.1.9</ecNumber>
    </recommendedName>
</protein>